<gene>
    <name type="primary">utp25</name>
    <name type="ORF">NFIA_016310</name>
</gene>
<proteinExistence type="inferred from homology"/>
<accession>A1D3E2</accession>
<reference key="1">
    <citation type="journal article" date="2008" name="PLoS Genet.">
        <title>Genomic islands in the pathogenic filamentous fungus Aspergillus fumigatus.</title>
        <authorList>
            <person name="Fedorova N.D."/>
            <person name="Khaldi N."/>
            <person name="Joardar V.S."/>
            <person name="Maiti R."/>
            <person name="Amedeo P."/>
            <person name="Anderson M.J."/>
            <person name="Crabtree J."/>
            <person name="Silva J.C."/>
            <person name="Badger J.H."/>
            <person name="Albarraq A."/>
            <person name="Angiuoli S."/>
            <person name="Bussey H."/>
            <person name="Bowyer P."/>
            <person name="Cotty P.J."/>
            <person name="Dyer P.S."/>
            <person name="Egan A."/>
            <person name="Galens K."/>
            <person name="Fraser-Liggett C.M."/>
            <person name="Haas B.J."/>
            <person name="Inman J.M."/>
            <person name="Kent R."/>
            <person name="Lemieux S."/>
            <person name="Malavazi I."/>
            <person name="Orvis J."/>
            <person name="Roemer T."/>
            <person name="Ronning C.M."/>
            <person name="Sundaram J.P."/>
            <person name="Sutton G."/>
            <person name="Turner G."/>
            <person name="Venter J.C."/>
            <person name="White O.R."/>
            <person name="Whitty B.R."/>
            <person name="Youngman P."/>
            <person name="Wolfe K.H."/>
            <person name="Goldman G.H."/>
            <person name="Wortman J.R."/>
            <person name="Jiang B."/>
            <person name="Denning D.W."/>
            <person name="Nierman W.C."/>
        </authorList>
    </citation>
    <scope>NUCLEOTIDE SEQUENCE [LARGE SCALE GENOMIC DNA]</scope>
    <source>
        <strain>ATCC 1020 / DSM 3700 / CBS 544.65 / FGSC A1164 / JCM 1740 / NRRL 181 / WB 181</strain>
    </source>
</reference>
<dbReference type="EMBL" id="DS027688">
    <property type="protein sequence ID" value="EAW22935.1"/>
    <property type="molecule type" value="Genomic_DNA"/>
</dbReference>
<dbReference type="RefSeq" id="XP_001264832.1">
    <property type="nucleotide sequence ID" value="XM_001264831.1"/>
</dbReference>
<dbReference type="STRING" id="331117.A1D3E2"/>
<dbReference type="EnsemblFungi" id="EAW22935">
    <property type="protein sequence ID" value="EAW22935"/>
    <property type="gene ID" value="NFIA_016310"/>
</dbReference>
<dbReference type="GeneID" id="4591884"/>
<dbReference type="KEGG" id="nfi:NFIA_016310"/>
<dbReference type="VEuPathDB" id="FungiDB:NFIA_016310"/>
<dbReference type="eggNOG" id="KOG2340">
    <property type="taxonomic scope" value="Eukaryota"/>
</dbReference>
<dbReference type="HOGENOM" id="CLU_018705_0_1_1"/>
<dbReference type="OMA" id="QDRGDTF"/>
<dbReference type="OrthoDB" id="10264378at2759"/>
<dbReference type="Proteomes" id="UP000006702">
    <property type="component" value="Unassembled WGS sequence"/>
</dbReference>
<dbReference type="GO" id="GO:0005730">
    <property type="term" value="C:nucleolus"/>
    <property type="evidence" value="ECO:0007669"/>
    <property type="project" value="UniProtKB-SubCell"/>
</dbReference>
<dbReference type="GO" id="GO:0032040">
    <property type="term" value="C:small-subunit processome"/>
    <property type="evidence" value="ECO:0007669"/>
    <property type="project" value="EnsemblFungi"/>
</dbReference>
<dbReference type="GO" id="GO:0019843">
    <property type="term" value="F:rRNA binding"/>
    <property type="evidence" value="ECO:0007669"/>
    <property type="project" value="EnsemblFungi"/>
</dbReference>
<dbReference type="GO" id="GO:0034511">
    <property type="term" value="F:U3 snoRNA binding"/>
    <property type="evidence" value="ECO:0007669"/>
    <property type="project" value="EnsemblFungi"/>
</dbReference>
<dbReference type="GO" id="GO:0000462">
    <property type="term" value="P:maturation of SSU-rRNA from tricistronic rRNA transcript (SSU-rRNA, 5.8S rRNA, LSU-rRNA)"/>
    <property type="evidence" value="ECO:0007669"/>
    <property type="project" value="EnsemblFungi"/>
</dbReference>
<dbReference type="FunFam" id="3.40.50.300:FF:002356">
    <property type="entry name" value="U3 small nucleolar RNA-associated protein 25"/>
    <property type="match status" value="1"/>
</dbReference>
<dbReference type="Gene3D" id="3.40.50.300">
    <property type="entry name" value="P-loop containing nucleotide triphosphate hydrolases"/>
    <property type="match status" value="1"/>
</dbReference>
<dbReference type="InterPro" id="IPR027417">
    <property type="entry name" value="P-loop_NTPase"/>
</dbReference>
<dbReference type="InterPro" id="IPR010678">
    <property type="entry name" value="UTP25"/>
</dbReference>
<dbReference type="InterPro" id="IPR053939">
    <property type="entry name" value="UTP25_C"/>
</dbReference>
<dbReference type="InterPro" id="IPR053940">
    <property type="entry name" value="UTP25_NTPase-like"/>
</dbReference>
<dbReference type="PANTHER" id="PTHR12933">
    <property type="entry name" value="ORF PROTEIN-RELATED"/>
    <property type="match status" value="1"/>
</dbReference>
<dbReference type="PANTHER" id="PTHR12933:SF0">
    <property type="entry name" value="U3 SMALL NUCLEOLAR RNA-ASSOCIATED PROTEIN 25 HOMOLOG"/>
    <property type="match status" value="1"/>
</dbReference>
<dbReference type="Pfam" id="PF06862">
    <property type="entry name" value="Utp25_C"/>
    <property type="match status" value="1"/>
</dbReference>
<dbReference type="Pfam" id="PF22916">
    <property type="entry name" value="UTP25_NTPase-like"/>
    <property type="match status" value="1"/>
</dbReference>
<evidence type="ECO:0000250" key="1"/>
<evidence type="ECO:0000256" key="2">
    <source>
        <dbReference type="SAM" id="MobiDB-lite"/>
    </source>
</evidence>
<evidence type="ECO:0000305" key="3"/>
<protein>
    <recommendedName>
        <fullName>U3 small nucleolar RNA-associated protein 25</fullName>
        <shortName>U3 snoRNA-associated protein 25</shortName>
    </recommendedName>
    <alternativeName>
        <fullName>U three protein 25</fullName>
    </alternativeName>
</protein>
<name>UTP25_NEOFI</name>
<comment type="function">
    <text evidence="1">DEAD-box RNA helicase-like protein required for pre-18S rRNA processing, specifically at sites A0, A1, and A2.</text>
</comment>
<comment type="subunit">
    <text evidence="1">Component of the ribosomal small subunit (SSU) processome composed of at least 40 protein subunits and snoRNA U3.</text>
</comment>
<comment type="subcellular location">
    <subcellularLocation>
        <location evidence="1">Nucleus</location>
        <location evidence="1">Nucleolus</location>
    </subcellularLocation>
</comment>
<comment type="similarity">
    <text evidence="3">Belongs to the UTP25 family.</text>
</comment>
<keyword id="KW-0539">Nucleus</keyword>
<keyword id="KW-1185">Reference proteome</keyword>
<keyword id="KW-0687">Ribonucleoprotein</keyword>
<keyword id="KW-0690">Ribosome biogenesis</keyword>
<keyword id="KW-0698">rRNA processing</keyword>
<feature type="chain" id="PRO_0000408124" description="U3 small nucleolar RNA-associated protein 25">
    <location>
        <begin position="1"/>
        <end position="728"/>
    </location>
</feature>
<feature type="region of interest" description="Disordered" evidence="2">
    <location>
        <begin position="1"/>
        <end position="172"/>
    </location>
</feature>
<feature type="compositionally biased region" description="Basic residues" evidence="2">
    <location>
        <begin position="7"/>
        <end position="18"/>
    </location>
</feature>
<feature type="compositionally biased region" description="Polar residues" evidence="2">
    <location>
        <begin position="22"/>
        <end position="32"/>
    </location>
</feature>
<feature type="compositionally biased region" description="Basic and acidic residues" evidence="2">
    <location>
        <begin position="33"/>
        <end position="54"/>
    </location>
</feature>
<feature type="compositionally biased region" description="Acidic residues" evidence="2">
    <location>
        <begin position="67"/>
        <end position="76"/>
    </location>
</feature>
<feature type="compositionally biased region" description="Basic and acidic residues" evidence="2">
    <location>
        <begin position="107"/>
        <end position="116"/>
    </location>
</feature>
<feature type="compositionally biased region" description="Acidic residues" evidence="2">
    <location>
        <begin position="122"/>
        <end position="146"/>
    </location>
</feature>
<feature type="compositionally biased region" description="Basic and acidic residues" evidence="2">
    <location>
        <begin position="147"/>
        <end position="157"/>
    </location>
</feature>
<sequence>MPPVRNRGGRFSRGRGKGPRGQTNRRNGFTTSRVEDVEPEDHSDNESHLSHEPAGDEMDHETQMDDVSSDSDDDEAQQTARPYNELIQLLQVNAEPKGPARKRRKVEHNGGEKRDAVPAANGEEDDAVLLGDDDLQEQEPSDEEEEDHPKEADGKYESDDEEDANDPFETHFSAVDESELALKIKSAEEKKWKNTKKEIGSGLKLVRAIPDIGEGDVSLLPAMKHFSIVKLKKKLYGPATERIPAISGDAQHIAPYIFGYQDVLYGARTTSNSSAMRDILAVHAVNHILKTRDRVLKNNSRIAKEQDADLDLRDQGFTRPKVLYLLPTRQACVRAVESITRFFQPEQQENKKRFLDSFSAADDKSWENKPEDFRELFGGNDDDMFRLGLKFTRKTMKYFSQFYNSDIILASPLGLRTIMDQADAKKRDHDFLSSVELVIVDHADALLMQNWDHVGYILDHLNLQPKEAHGCDFSRVRTWYLDNHARFVRQMIVSASFITPEINSLFSTHMQNFAGKIKVTPVYAGAISEVPLPVSVKQTFSRFDSLTPTKDPDARFKHFTTTVLSSLVRNITSSRDKSSAGGTLIFIPSYLDFVRVRNYFATSSQTTNVSFGAISEYSEVREMTRARTHFMNGRHSVLLYTERLHHFRRYQIRGVKRIVMYGVPENPLFWGEIVGFLGLDPAGVVDAAEGGVRALFSRWDALKLERIVGTKRVGNMLREKGGDTFTFV</sequence>
<organism>
    <name type="scientific">Neosartorya fischeri (strain ATCC 1020 / DSM 3700 / CBS 544.65 / FGSC A1164 / JCM 1740 / NRRL 181 / WB 181)</name>
    <name type="common">Aspergillus fischerianus</name>
    <dbReference type="NCBI Taxonomy" id="331117"/>
    <lineage>
        <taxon>Eukaryota</taxon>
        <taxon>Fungi</taxon>
        <taxon>Dikarya</taxon>
        <taxon>Ascomycota</taxon>
        <taxon>Pezizomycotina</taxon>
        <taxon>Eurotiomycetes</taxon>
        <taxon>Eurotiomycetidae</taxon>
        <taxon>Eurotiales</taxon>
        <taxon>Aspergillaceae</taxon>
        <taxon>Aspergillus</taxon>
        <taxon>Aspergillus subgen. Fumigati</taxon>
    </lineage>
</organism>